<dbReference type="EC" id="2.8.4.3" evidence="1"/>
<dbReference type="EMBL" id="AP006618">
    <property type="protein sequence ID" value="BAD58683.1"/>
    <property type="molecule type" value="Genomic_DNA"/>
</dbReference>
<dbReference type="RefSeq" id="WP_011210368.1">
    <property type="nucleotide sequence ID" value="NC_006361.1"/>
</dbReference>
<dbReference type="SMR" id="Q5YT08"/>
<dbReference type="STRING" id="247156.NFA_38350"/>
<dbReference type="GeneID" id="61134522"/>
<dbReference type="KEGG" id="nfa:NFA_38350"/>
<dbReference type="eggNOG" id="COG0621">
    <property type="taxonomic scope" value="Bacteria"/>
</dbReference>
<dbReference type="HOGENOM" id="CLU_018697_2_2_11"/>
<dbReference type="OrthoDB" id="9805215at2"/>
<dbReference type="Proteomes" id="UP000006820">
    <property type="component" value="Chromosome"/>
</dbReference>
<dbReference type="GO" id="GO:0005829">
    <property type="term" value="C:cytosol"/>
    <property type="evidence" value="ECO:0007669"/>
    <property type="project" value="TreeGrafter"/>
</dbReference>
<dbReference type="GO" id="GO:0051539">
    <property type="term" value="F:4 iron, 4 sulfur cluster binding"/>
    <property type="evidence" value="ECO:0007669"/>
    <property type="project" value="UniProtKB-UniRule"/>
</dbReference>
<dbReference type="GO" id="GO:0046872">
    <property type="term" value="F:metal ion binding"/>
    <property type="evidence" value="ECO:0007669"/>
    <property type="project" value="UniProtKB-KW"/>
</dbReference>
<dbReference type="GO" id="GO:0035597">
    <property type="term" value="F:N6-isopentenyladenosine methylthiotransferase activity"/>
    <property type="evidence" value="ECO:0007669"/>
    <property type="project" value="TreeGrafter"/>
</dbReference>
<dbReference type="CDD" id="cd01335">
    <property type="entry name" value="Radical_SAM"/>
    <property type="match status" value="1"/>
</dbReference>
<dbReference type="FunFam" id="3.40.50.12160:FF:000003">
    <property type="entry name" value="CDK5 regulatory subunit-associated protein 1"/>
    <property type="match status" value="1"/>
</dbReference>
<dbReference type="FunFam" id="3.80.30.20:FF:000001">
    <property type="entry name" value="tRNA-2-methylthio-N(6)-dimethylallyladenosine synthase 2"/>
    <property type="match status" value="1"/>
</dbReference>
<dbReference type="Gene3D" id="3.40.50.12160">
    <property type="entry name" value="Methylthiotransferase, N-terminal domain"/>
    <property type="match status" value="1"/>
</dbReference>
<dbReference type="Gene3D" id="3.80.30.20">
    <property type="entry name" value="tm_1862 like domain"/>
    <property type="match status" value="1"/>
</dbReference>
<dbReference type="HAMAP" id="MF_01864">
    <property type="entry name" value="tRNA_metthiotr_MiaB"/>
    <property type="match status" value="1"/>
</dbReference>
<dbReference type="InterPro" id="IPR006638">
    <property type="entry name" value="Elp3/MiaA/NifB-like_rSAM"/>
</dbReference>
<dbReference type="InterPro" id="IPR005839">
    <property type="entry name" value="Methylthiotransferase"/>
</dbReference>
<dbReference type="InterPro" id="IPR020612">
    <property type="entry name" value="Methylthiotransferase_CS"/>
</dbReference>
<dbReference type="InterPro" id="IPR013848">
    <property type="entry name" value="Methylthiotransferase_N"/>
</dbReference>
<dbReference type="InterPro" id="IPR038135">
    <property type="entry name" value="Methylthiotransferase_N_sf"/>
</dbReference>
<dbReference type="InterPro" id="IPR006463">
    <property type="entry name" value="MiaB_methiolase"/>
</dbReference>
<dbReference type="InterPro" id="IPR007197">
    <property type="entry name" value="rSAM"/>
</dbReference>
<dbReference type="InterPro" id="IPR023404">
    <property type="entry name" value="rSAM_horseshoe"/>
</dbReference>
<dbReference type="InterPro" id="IPR002792">
    <property type="entry name" value="TRAM_dom"/>
</dbReference>
<dbReference type="NCBIfam" id="TIGR01574">
    <property type="entry name" value="miaB-methiolase"/>
    <property type="match status" value="1"/>
</dbReference>
<dbReference type="NCBIfam" id="TIGR00089">
    <property type="entry name" value="MiaB/RimO family radical SAM methylthiotransferase"/>
    <property type="match status" value="1"/>
</dbReference>
<dbReference type="PANTHER" id="PTHR43020">
    <property type="entry name" value="CDK5 REGULATORY SUBUNIT-ASSOCIATED PROTEIN 1"/>
    <property type="match status" value="1"/>
</dbReference>
<dbReference type="PANTHER" id="PTHR43020:SF2">
    <property type="entry name" value="MITOCHONDRIAL TRNA METHYLTHIOTRANSFERASE CDK5RAP1"/>
    <property type="match status" value="1"/>
</dbReference>
<dbReference type="Pfam" id="PF04055">
    <property type="entry name" value="Radical_SAM"/>
    <property type="match status" value="1"/>
</dbReference>
<dbReference type="Pfam" id="PF00919">
    <property type="entry name" value="UPF0004"/>
    <property type="match status" value="1"/>
</dbReference>
<dbReference type="SFLD" id="SFLDF00273">
    <property type="entry name" value="(dimethylallyl)adenosine_tRNA"/>
    <property type="match status" value="1"/>
</dbReference>
<dbReference type="SFLD" id="SFLDG01082">
    <property type="entry name" value="B12-binding_domain_containing"/>
    <property type="match status" value="1"/>
</dbReference>
<dbReference type="SFLD" id="SFLDS00029">
    <property type="entry name" value="Radical_SAM"/>
    <property type="match status" value="1"/>
</dbReference>
<dbReference type="SMART" id="SM00729">
    <property type="entry name" value="Elp3"/>
    <property type="match status" value="1"/>
</dbReference>
<dbReference type="SUPFAM" id="SSF102114">
    <property type="entry name" value="Radical SAM enzymes"/>
    <property type="match status" value="1"/>
</dbReference>
<dbReference type="PROSITE" id="PS51449">
    <property type="entry name" value="MTTASE_N"/>
    <property type="match status" value="1"/>
</dbReference>
<dbReference type="PROSITE" id="PS01278">
    <property type="entry name" value="MTTASE_RADICAL"/>
    <property type="match status" value="1"/>
</dbReference>
<dbReference type="PROSITE" id="PS51918">
    <property type="entry name" value="RADICAL_SAM"/>
    <property type="match status" value="1"/>
</dbReference>
<dbReference type="PROSITE" id="PS50926">
    <property type="entry name" value="TRAM"/>
    <property type="match status" value="1"/>
</dbReference>
<sequence>MTRARSYEIRTFGCQMNVHDSERLSGLLEDAGYVKAAPGATADLVVFNTCAVRENADNKLYGTLGHLAPVKAGRPGMQIAVGGCLAQKDRDTVVRKAPWVDVVFGTHNIGSLPVLLERARHNEQAQVEILESLEAFPSTLPAKRESAYAGWVSISVGCNNTCTFCIVPALRGKEVDRRPGDVLAEVQALVDQGVLEVTLLGQNVNSYGASFADPDEPRDRGAFAKLLRACGGIEGLERVRFTSPHPAEFTDDVIEAMAQTPNICPQLHMPLQSGSDRVLKAMRRSYRKARYLGIIEKVRAAMPHAAITTDIIVGFPGETEEDFQETLDVVRQARFTSAFTFQYSKRPGTPAAEMADQVPKQVVQERYDRLIALQEEISLAANRELIGTEVELLVAEGSGKKNAATARMSGRARDGRLVHFRPGGTAEPIRPGDLVTVDITEAAPHHLIADAPVKTHRRTRAGDAHERGITPKTAPIGVGLGLPRIGAPAPEPVAAGCSTGCGA</sequence>
<gene>
    <name evidence="1" type="primary">miaB</name>
    <name type="ordered locus">NFA_38350</name>
</gene>
<accession>Q5YT08</accession>
<feature type="chain" id="PRO_0000374414" description="tRNA-2-methylthio-N(6)-dimethylallyladenosine synthase">
    <location>
        <begin position="1"/>
        <end position="503"/>
    </location>
</feature>
<feature type="domain" description="MTTase N-terminal" evidence="1">
    <location>
        <begin position="5"/>
        <end position="121"/>
    </location>
</feature>
<feature type="domain" description="Radical SAM core" evidence="2">
    <location>
        <begin position="144"/>
        <end position="380"/>
    </location>
</feature>
<feature type="domain" description="TRAM" evidence="1">
    <location>
        <begin position="383"/>
        <end position="453"/>
    </location>
</feature>
<feature type="binding site" evidence="1">
    <location>
        <position position="14"/>
    </location>
    <ligand>
        <name>[4Fe-4S] cluster</name>
        <dbReference type="ChEBI" id="CHEBI:49883"/>
        <label>1</label>
    </ligand>
</feature>
<feature type="binding site" evidence="1">
    <location>
        <position position="50"/>
    </location>
    <ligand>
        <name>[4Fe-4S] cluster</name>
        <dbReference type="ChEBI" id="CHEBI:49883"/>
        <label>1</label>
    </ligand>
</feature>
<feature type="binding site" evidence="1">
    <location>
        <position position="84"/>
    </location>
    <ligand>
        <name>[4Fe-4S] cluster</name>
        <dbReference type="ChEBI" id="CHEBI:49883"/>
        <label>1</label>
    </ligand>
</feature>
<feature type="binding site" evidence="1">
    <location>
        <position position="158"/>
    </location>
    <ligand>
        <name>[4Fe-4S] cluster</name>
        <dbReference type="ChEBI" id="CHEBI:49883"/>
        <label>2</label>
        <note>4Fe-4S-S-AdoMet</note>
    </ligand>
</feature>
<feature type="binding site" evidence="1">
    <location>
        <position position="162"/>
    </location>
    <ligand>
        <name>[4Fe-4S] cluster</name>
        <dbReference type="ChEBI" id="CHEBI:49883"/>
        <label>2</label>
        <note>4Fe-4S-S-AdoMet</note>
    </ligand>
</feature>
<feature type="binding site" evidence="1">
    <location>
        <position position="165"/>
    </location>
    <ligand>
        <name>[4Fe-4S] cluster</name>
        <dbReference type="ChEBI" id="CHEBI:49883"/>
        <label>2</label>
        <note>4Fe-4S-S-AdoMet</note>
    </ligand>
</feature>
<proteinExistence type="inferred from homology"/>
<keyword id="KW-0004">4Fe-4S</keyword>
<keyword id="KW-0963">Cytoplasm</keyword>
<keyword id="KW-0408">Iron</keyword>
<keyword id="KW-0411">Iron-sulfur</keyword>
<keyword id="KW-0479">Metal-binding</keyword>
<keyword id="KW-1185">Reference proteome</keyword>
<keyword id="KW-0949">S-adenosyl-L-methionine</keyword>
<keyword id="KW-0808">Transferase</keyword>
<keyword id="KW-0819">tRNA processing</keyword>
<reference key="1">
    <citation type="journal article" date="2004" name="Proc. Natl. Acad. Sci. U.S.A.">
        <title>The complete genomic sequence of Nocardia farcinica IFM 10152.</title>
        <authorList>
            <person name="Ishikawa J."/>
            <person name="Yamashita A."/>
            <person name="Mikami Y."/>
            <person name="Hoshino Y."/>
            <person name="Kurita H."/>
            <person name="Hotta K."/>
            <person name="Shiba T."/>
            <person name="Hattori M."/>
        </authorList>
    </citation>
    <scope>NUCLEOTIDE SEQUENCE [LARGE SCALE GENOMIC DNA]</scope>
    <source>
        <strain>IFM 10152</strain>
    </source>
</reference>
<comment type="function">
    <text evidence="1">Catalyzes the methylthiolation of N6-(dimethylallyl)adenosine (i(6)A), leading to the formation of 2-methylthio-N6-(dimethylallyl)adenosine (ms(2)i(6)A) at position 37 in tRNAs that read codons beginning with uridine.</text>
</comment>
<comment type="catalytic activity">
    <reaction evidence="1">
        <text>N(6)-dimethylallyladenosine(37) in tRNA + (sulfur carrier)-SH + AH2 + 2 S-adenosyl-L-methionine = 2-methylsulfanyl-N(6)-dimethylallyladenosine(37) in tRNA + (sulfur carrier)-H + 5'-deoxyadenosine + L-methionine + A + S-adenosyl-L-homocysteine + 2 H(+)</text>
        <dbReference type="Rhea" id="RHEA:37067"/>
        <dbReference type="Rhea" id="RHEA-COMP:10375"/>
        <dbReference type="Rhea" id="RHEA-COMP:10376"/>
        <dbReference type="Rhea" id="RHEA-COMP:14737"/>
        <dbReference type="Rhea" id="RHEA-COMP:14739"/>
        <dbReference type="ChEBI" id="CHEBI:13193"/>
        <dbReference type="ChEBI" id="CHEBI:15378"/>
        <dbReference type="ChEBI" id="CHEBI:17319"/>
        <dbReference type="ChEBI" id="CHEBI:17499"/>
        <dbReference type="ChEBI" id="CHEBI:29917"/>
        <dbReference type="ChEBI" id="CHEBI:57844"/>
        <dbReference type="ChEBI" id="CHEBI:57856"/>
        <dbReference type="ChEBI" id="CHEBI:59789"/>
        <dbReference type="ChEBI" id="CHEBI:64428"/>
        <dbReference type="ChEBI" id="CHEBI:74415"/>
        <dbReference type="ChEBI" id="CHEBI:74417"/>
        <dbReference type="EC" id="2.8.4.3"/>
    </reaction>
</comment>
<comment type="cofactor">
    <cofactor evidence="1">
        <name>[4Fe-4S] cluster</name>
        <dbReference type="ChEBI" id="CHEBI:49883"/>
    </cofactor>
    <text evidence="1">Binds 2 [4Fe-4S] clusters. One cluster is coordinated with 3 cysteines and an exchangeable S-adenosyl-L-methionine.</text>
</comment>
<comment type="subunit">
    <text evidence="1">Monomer.</text>
</comment>
<comment type="subcellular location">
    <subcellularLocation>
        <location evidence="1">Cytoplasm</location>
    </subcellularLocation>
</comment>
<comment type="similarity">
    <text evidence="1">Belongs to the methylthiotransferase family. MiaB subfamily.</text>
</comment>
<name>MIAB_NOCFA</name>
<protein>
    <recommendedName>
        <fullName evidence="1">tRNA-2-methylthio-N(6)-dimethylallyladenosine synthase</fullName>
        <ecNumber evidence="1">2.8.4.3</ecNumber>
    </recommendedName>
    <alternativeName>
        <fullName evidence="1">(Dimethylallyl)adenosine tRNA methylthiotransferase MiaB</fullName>
    </alternativeName>
    <alternativeName>
        <fullName evidence="1">tRNA-i(6)A37 methylthiotransferase</fullName>
    </alternativeName>
</protein>
<evidence type="ECO:0000255" key="1">
    <source>
        <dbReference type="HAMAP-Rule" id="MF_01864"/>
    </source>
</evidence>
<evidence type="ECO:0000255" key="2">
    <source>
        <dbReference type="PROSITE-ProRule" id="PRU01266"/>
    </source>
</evidence>
<organism>
    <name type="scientific">Nocardia farcinica (strain IFM 10152)</name>
    <dbReference type="NCBI Taxonomy" id="247156"/>
    <lineage>
        <taxon>Bacteria</taxon>
        <taxon>Bacillati</taxon>
        <taxon>Actinomycetota</taxon>
        <taxon>Actinomycetes</taxon>
        <taxon>Mycobacteriales</taxon>
        <taxon>Nocardiaceae</taxon>
        <taxon>Nocardia</taxon>
    </lineage>
</organism>